<keyword id="KW-0647">Proteasome</keyword>
<keyword id="KW-1185">Reference proteome</keyword>
<gene>
    <name type="primary">PSMD6</name>
</gene>
<name>PSMD6_BOVIN</name>
<dbReference type="EMBL" id="BC102468">
    <property type="protein sequence ID" value="AAI02469.1"/>
    <property type="molecule type" value="mRNA"/>
</dbReference>
<dbReference type="RefSeq" id="NP_001029821.1">
    <property type="nucleotide sequence ID" value="NM_001034649.2"/>
</dbReference>
<dbReference type="SMR" id="Q3T0B2"/>
<dbReference type="FunCoup" id="Q3T0B2">
    <property type="interactions" value="3300"/>
</dbReference>
<dbReference type="STRING" id="9913.ENSBTAP00000020108"/>
<dbReference type="PaxDb" id="9913-ENSBTAP00000020108"/>
<dbReference type="PeptideAtlas" id="Q3T0B2"/>
<dbReference type="GeneID" id="538625"/>
<dbReference type="KEGG" id="bta:538625"/>
<dbReference type="CTD" id="9861"/>
<dbReference type="eggNOG" id="KOG0687">
    <property type="taxonomic scope" value="Eukaryota"/>
</dbReference>
<dbReference type="InParanoid" id="Q3T0B2"/>
<dbReference type="OrthoDB" id="1452at2759"/>
<dbReference type="Proteomes" id="UP000009136">
    <property type="component" value="Unplaced"/>
</dbReference>
<dbReference type="GO" id="GO:0005829">
    <property type="term" value="C:cytosol"/>
    <property type="evidence" value="ECO:0000304"/>
    <property type="project" value="Reactome"/>
</dbReference>
<dbReference type="GO" id="GO:0022624">
    <property type="term" value="C:proteasome accessory complex"/>
    <property type="evidence" value="ECO:0000250"/>
    <property type="project" value="UniProtKB"/>
</dbReference>
<dbReference type="GO" id="GO:0005838">
    <property type="term" value="C:proteasome regulatory particle"/>
    <property type="evidence" value="ECO:0000318"/>
    <property type="project" value="GO_Central"/>
</dbReference>
<dbReference type="GO" id="GO:0043161">
    <property type="term" value="P:proteasome-mediated ubiquitin-dependent protein catabolic process"/>
    <property type="evidence" value="ECO:0000318"/>
    <property type="project" value="GO_Central"/>
</dbReference>
<dbReference type="FunFam" id="1.25.40.570:FF:000004">
    <property type="entry name" value="26S proteasome non-ATPase regulatory subunit 6"/>
    <property type="match status" value="1"/>
</dbReference>
<dbReference type="Gene3D" id="1.25.40.570">
    <property type="match status" value="1"/>
</dbReference>
<dbReference type="InterPro" id="IPR000717">
    <property type="entry name" value="PCI_dom"/>
</dbReference>
<dbReference type="InterPro" id="IPR019585">
    <property type="entry name" value="Rpn7/CSN1"/>
</dbReference>
<dbReference type="InterPro" id="IPR045135">
    <property type="entry name" value="Rpn7_N"/>
</dbReference>
<dbReference type="InterPro" id="IPR049549">
    <property type="entry name" value="RPN7_PSMD6_C"/>
</dbReference>
<dbReference type="InterPro" id="IPR011990">
    <property type="entry name" value="TPR-like_helical_dom_sf"/>
</dbReference>
<dbReference type="InterPro" id="IPR036390">
    <property type="entry name" value="WH_DNA-bd_sf"/>
</dbReference>
<dbReference type="PANTHER" id="PTHR14145:SF1">
    <property type="entry name" value="26S PROTEASOME NON-ATPASE REGULATORY SUBUNIT 6"/>
    <property type="match status" value="1"/>
</dbReference>
<dbReference type="PANTHER" id="PTHR14145">
    <property type="entry name" value="26S PROTESOME SUBUNIT 6"/>
    <property type="match status" value="1"/>
</dbReference>
<dbReference type="Pfam" id="PF01399">
    <property type="entry name" value="PCI"/>
    <property type="match status" value="1"/>
</dbReference>
<dbReference type="Pfam" id="PF10602">
    <property type="entry name" value="RPN7"/>
    <property type="match status" value="1"/>
</dbReference>
<dbReference type="Pfam" id="PF21154">
    <property type="entry name" value="RPN7_PSMD6_C"/>
    <property type="match status" value="1"/>
</dbReference>
<dbReference type="SMART" id="SM00088">
    <property type="entry name" value="PINT"/>
    <property type="match status" value="1"/>
</dbReference>
<dbReference type="SUPFAM" id="SSF48452">
    <property type="entry name" value="TPR-like"/>
    <property type="match status" value="1"/>
</dbReference>
<dbReference type="SUPFAM" id="SSF46785">
    <property type="entry name" value="Winged helix' DNA-binding domain"/>
    <property type="match status" value="1"/>
</dbReference>
<dbReference type="PROSITE" id="PS50250">
    <property type="entry name" value="PCI"/>
    <property type="match status" value="1"/>
</dbReference>
<accession>Q3T0B2</accession>
<evidence type="ECO:0000250" key="1">
    <source>
        <dbReference type="UniProtKB" id="Q15008"/>
    </source>
</evidence>
<evidence type="ECO:0000255" key="2">
    <source>
        <dbReference type="PROSITE-ProRule" id="PRU01185"/>
    </source>
</evidence>
<evidence type="ECO:0000305" key="3"/>
<reference key="1">
    <citation type="submission" date="2005-08" db="EMBL/GenBank/DDBJ databases">
        <authorList>
            <consortium name="NIH - Mammalian Gene Collection (MGC) project"/>
        </authorList>
    </citation>
    <scope>NUCLEOTIDE SEQUENCE [LARGE SCALE MRNA]</scope>
    <source>
        <strain>Crossbred X Angus</strain>
        <tissue>Ileum</tissue>
    </source>
</reference>
<feature type="chain" id="PRO_0000239835" description="26S proteasome non-ATPase regulatory subunit 6">
    <location>
        <begin position="1"/>
        <end position="389"/>
    </location>
</feature>
<feature type="domain" description="PCI" evidence="2">
    <location>
        <begin position="193"/>
        <end position="361"/>
    </location>
</feature>
<proteinExistence type="evidence at transcript level"/>
<comment type="function">
    <text evidence="1">Component of the 26S proteasome, a multiprotein complex involved in the ATP-dependent degradation of ubiquitinated proteins. This complex plays a key role in the maintenance of protein homeostasis by removing misfolded or damaged proteins, which could impair cellular functions, and by removing proteins whose functions are no longer required. Therefore, the proteasome participates in numerous cellular processes, including cell cycle progression, apoptosis, or DNA damage repair.</text>
</comment>
<comment type="subunit">
    <text evidence="1">Component of the 19S proteasome regulatory particle complex. The 26S proteasome consists of a 20S core particle (CP) and two 19S regulatory subunits (RP). The regulatory particle is made of a lid composed of 9 subunits including PSMD6, a base containing 6 ATPases and few additional components.</text>
</comment>
<comment type="similarity">
    <text evidence="3">Belongs to the proteasome subunit S10 family.</text>
</comment>
<sequence>MPLENLEEEGLPKNPDLRIAQLRFLLSLPEHRGDAAVRDELMAAVRDNNMAPYYEALCKSLEWQMDVDLLNKMKKANEDELKRLDEELEDAEKNLGESEIRDAMMAKAEYLCRIGDKEGALTAFRRTYDKTVALGHRLDIVFYLLRIGLFYMDNDLITRNTEKAKSLIEEGGDWDRRNRLKVYQGLYCVAIRDFKQAAELFLDTVSTFTSYELMDYKTFVTYTVYVSMIALERPDLREKVIKGAEILEVLHSLPAVRQYLFSLYECRYSVFFQSLAIVEQEMKKDWLFAPHYRYYVREMRIHAYSQLLESYRSLTLGYMAEAFGVGVEFIDQELSRFIAAGRLHCKIDKVNEVVETNRPDSKNWQYQETIKKGGLLLNRVQKLSRVINM</sequence>
<organism>
    <name type="scientific">Bos taurus</name>
    <name type="common">Bovine</name>
    <dbReference type="NCBI Taxonomy" id="9913"/>
    <lineage>
        <taxon>Eukaryota</taxon>
        <taxon>Metazoa</taxon>
        <taxon>Chordata</taxon>
        <taxon>Craniata</taxon>
        <taxon>Vertebrata</taxon>
        <taxon>Euteleostomi</taxon>
        <taxon>Mammalia</taxon>
        <taxon>Eutheria</taxon>
        <taxon>Laurasiatheria</taxon>
        <taxon>Artiodactyla</taxon>
        <taxon>Ruminantia</taxon>
        <taxon>Pecora</taxon>
        <taxon>Bovidae</taxon>
        <taxon>Bovinae</taxon>
        <taxon>Bos</taxon>
    </lineage>
</organism>
<protein>
    <recommendedName>
        <fullName>26S proteasome non-ATPase regulatory subunit 6</fullName>
    </recommendedName>
    <alternativeName>
        <fullName>26S proteasome regulatory subunit RPN7</fullName>
    </alternativeName>
</protein>